<dbReference type="EMBL" id="CP000312">
    <property type="protein sequence ID" value="ABG85511.1"/>
    <property type="molecule type" value="Genomic_DNA"/>
</dbReference>
<dbReference type="RefSeq" id="WP_003454268.1">
    <property type="nucleotide sequence ID" value="NZ_CAXVKH010000004.1"/>
</dbReference>
<dbReference type="SMR" id="Q0SQF9"/>
<dbReference type="GeneID" id="93001024"/>
<dbReference type="KEGG" id="cpr:CPR_2384"/>
<dbReference type="Proteomes" id="UP000001824">
    <property type="component" value="Chromosome"/>
</dbReference>
<dbReference type="GO" id="GO:0022625">
    <property type="term" value="C:cytosolic large ribosomal subunit"/>
    <property type="evidence" value="ECO:0007669"/>
    <property type="project" value="TreeGrafter"/>
</dbReference>
<dbReference type="GO" id="GO:0019843">
    <property type="term" value="F:rRNA binding"/>
    <property type="evidence" value="ECO:0007669"/>
    <property type="project" value="UniProtKB-UniRule"/>
</dbReference>
<dbReference type="GO" id="GO:0003735">
    <property type="term" value="F:structural constituent of ribosome"/>
    <property type="evidence" value="ECO:0007669"/>
    <property type="project" value="InterPro"/>
</dbReference>
<dbReference type="GO" id="GO:0002181">
    <property type="term" value="P:cytoplasmic translation"/>
    <property type="evidence" value="ECO:0007669"/>
    <property type="project" value="TreeGrafter"/>
</dbReference>
<dbReference type="FunFam" id="3.90.930.12:FF:000001">
    <property type="entry name" value="50S ribosomal protein L6"/>
    <property type="match status" value="1"/>
</dbReference>
<dbReference type="FunFam" id="3.90.930.12:FF:000002">
    <property type="entry name" value="50S ribosomal protein L6"/>
    <property type="match status" value="1"/>
</dbReference>
<dbReference type="Gene3D" id="3.90.930.12">
    <property type="entry name" value="Ribosomal protein L6, alpha-beta domain"/>
    <property type="match status" value="2"/>
</dbReference>
<dbReference type="HAMAP" id="MF_01365_B">
    <property type="entry name" value="Ribosomal_uL6_B"/>
    <property type="match status" value="1"/>
</dbReference>
<dbReference type="InterPro" id="IPR000702">
    <property type="entry name" value="Ribosomal_uL6-like"/>
</dbReference>
<dbReference type="InterPro" id="IPR036789">
    <property type="entry name" value="Ribosomal_uL6-like_a/b-dom_sf"/>
</dbReference>
<dbReference type="InterPro" id="IPR020040">
    <property type="entry name" value="Ribosomal_uL6_a/b-dom"/>
</dbReference>
<dbReference type="InterPro" id="IPR019906">
    <property type="entry name" value="Ribosomal_uL6_bac-type"/>
</dbReference>
<dbReference type="InterPro" id="IPR002358">
    <property type="entry name" value="Ribosomal_uL6_CS"/>
</dbReference>
<dbReference type="NCBIfam" id="TIGR03654">
    <property type="entry name" value="L6_bact"/>
    <property type="match status" value="1"/>
</dbReference>
<dbReference type="PANTHER" id="PTHR11655">
    <property type="entry name" value="60S/50S RIBOSOMAL PROTEIN L6/L9"/>
    <property type="match status" value="1"/>
</dbReference>
<dbReference type="PANTHER" id="PTHR11655:SF14">
    <property type="entry name" value="LARGE RIBOSOMAL SUBUNIT PROTEIN UL6M"/>
    <property type="match status" value="1"/>
</dbReference>
<dbReference type="Pfam" id="PF00347">
    <property type="entry name" value="Ribosomal_L6"/>
    <property type="match status" value="2"/>
</dbReference>
<dbReference type="PIRSF" id="PIRSF002162">
    <property type="entry name" value="Ribosomal_L6"/>
    <property type="match status" value="1"/>
</dbReference>
<dbReference type="PRINTS" id="PR00059">
    <property type="entry name" value="RIBOSOMALL6"/>
</dbReference>
<dbReference type="SUPFAM" id="SSF56053">
    <property type="entry name" value="Ribosomal protein L6"/>
    <property type="match status" value="2"/>
</dbReference>
<dbReference type="PROSITE" id="PS00525">
    <property type="entry name" value="RIBOSOMAL_L6_1"/>
    <property type="match status" value="1"/>
</dbReference>
<reference key="1">
    <citation type="journal article" date="2006" name="Genome Res.">
        <title>Skewed genomic variability in strains of the toxigenic bacterial pathogen, Clostridium perfringens.</title>
        <authorList>
            <person name="Myers G.S.A."/>
            <person name="Rasko D.A."/>
            <person name="Cheung J.K."/>
            <person name="Ravel J."/>
            <person name="Seshadri R."/>
            <person name="DeBoy R.T."/>
            <person name="Ren Q."/>
            <person name="Varga J."/>
            <person name="Awad M.M."/>
            <person name="Brinkac L.M."/>
            <person name="Daugherty S.C."/>
            <person name="Haft D.H."/>
            <person name="Dodson R.J."/>
            <person name="Madupu R."/>
            <person name="Nelson W.C."/>
            <person name="Rosovitz M.J."/>
            <person name="Sullivan S.A."/>
            <person name="Khouri H."/>
            <person name="Dimitrov G.I."/>
            <person name="Watkins K.L."/>
            <person name="Mulligan S."/>
            <person name="Benton J."/>
            <person name="Radune D."/>
            <person name="Fisher D.J."/>
            <person name="Atkins H.S."/>
            <person name="Hiscox T."/>
            <person name="Jost B.H."/>
            <person name="Billington S.J."/>
            <person name="Songer J.G."/>
            <person name="McClane B.A."/>
            <person name="Titball R.W."/>
            <person name="Rood J.I."/>
            <person name="Melville S.B."/>
            <person name="Paulsen I.T."/>
        </authorList>
    </citation>
    <scope>NUCLEOTIDE SEQUENCE [LARGE SCALE GENOMIC DNA]</scope>
    <source>
        <strain>SM101 / Type A</strain>
    </source>
</reference>
<protein>
    <recommendedName>
        <fullName evidence="1">Large ribosomal subunit protein uL6</fullName>
    </recommendedName>
    <alternativeName>
        <fullName evidence="2">50S ribosomal protein L6</fullName>
    </alternativeName>
</protein>
<evidence type="ECO:0000255" key="1">
    <source>
        <dbReference type="HAMAP-Rule" id="MF_01365"/>
    </source>
</evidence>
<evidence type="ECO:0000305" key="2"/>
<accession>Q0SQF9</accession>
<comment type="function">
    <text evidence="1">This protein binds to the 23S rRNA, and is important in its secondary structure. It is located near the subunit interface in the base of the L7/L12 stalk, and near the tRNA binding site of the peptidyltransferase center.</text>
</comment>
<comment type="subunit">
    <text evidence="1">Part of the 50S ribosomal subunit.</text>
</comment>
<comment type="similarity">
    <text evidence="1">Belongs to the universal ribosomal protein uL6 family.</text>
</comment>
<keyword id="KW-0687">Ribonucleoprotein</keyword>
<keyword id="KW-0689">Ribosomal protein</keyword>
<keyword id="KW-0694">RNA-binding</keyword>
<keyword id="KW-0699">rRNA-binding</keyword>
<sequence>MSRVGKMPIAIPAGVTVTVTPENVVTVKGPKGELVKAMHKDINIAVEDAQVVVTRPSDVKEHRALHGLTRALLNNMVVGVSQGFSKTLELNGVGYRAQLQGKKLVMNLGYSHPVEVEAVDGVDFKLDGTTKVIVEGIDKEKVGAVAANIRSWRKPEPYKGKGIKYSDEVIRRKEGKTGK</sequence>
<name>RL6_CLOPS</name>
<gene>
    <name evidence="1" type="primary">rplF</name>
    <name type="ordered locus">CPR_2384</name>
</gene>
<proteinExistence type="inferred from homology"/>
<feature type="chain" id="PRO_0000260852" description="Large ribosomal subunit protein uL6">
    <location>
        <begin position="1"/>
        <end position="179"/>
    </location>
</feature>
<organism>
    <name type="scientific">Clostridium perfringens (strain SM101 / Type A)</name>
    <dbReference type="NCBI Taxonomy" id="289380"/>
    <lineage>
        <taxon>Bacteria</taxon>
        <taxon>Bacillati</taxon>
        <taxon>Bacillota</taxon>
        <taxon>Clostridia</taxon>
        <taxon>Eubacteriales</taxon>
        <taxon>Clostridiaceae</taxon>
        <taxon>Clostridium</taxon>
    </lineage>
</organism>